<evidence type="ECO:0000255" key="1">
    <source>
        <dbReference type="HAMAP-Rule" id="MF_00607"/>
    </source>
</evidence>
<reference key="1">
    <citation type="journal article" date="2009" name="Genome Biol.">
        <title>Genomic and genetic analyses of diversity and plant interactions of Pseudomonas fluorescens.</title>
        <authorList>
            <person name="Silby M.W."/>
            <person name="Cerdeno-Tarraga A.M."/>
            <person name="Vernikos G.S."/>
            <person name="Giddens S.R."/>
            <person name="Jackson R.W."/>
            <person name="Preston G.M."/>
            <person name="Zhang X.-X."/>
            <person name="Moon C.D."/>
            <person name="Gehrig S.M."/>
            <person name="Godfrey S.A.C."/>
            <person name="Knight C.G."/>
            <person name="Malone J.G."/>
            <person name="Robinson Z."/>
            <person name="Spiers A.J."/>
            <person name="Harris S."/>
            <person name="Challis G.L."/>
            <person name="Yaxley A.M."/>
            <person name="Harris D."/>
            <person name="Seeger K."/>
            <person name="Murphy L."/>
            <person name="Rutter S."/>
            <person name="Squares R."/>
            <person name="Quail M.A."/>
            <person name="Saunders E."/>
            <person name="Mavromatis K."/>
            <person name="Brettin T.S."/>
            <person name="Bentley S.D."/>
            <person name="Hothersall J."/>
            <person name="Stephens E."/>
            <person name="Thomas C.M."/>
            <person name="Parkhill J."/>
            <person name="Levy S.B."/>
            <person name="Rainey P.B."/>
            <person name="Thomson N.R."/>
        </authorList>
    </citation>
    <scope>NUCLEOTIDE SEQUENCE [LARGE SCALE GENOMIC DNA]</scope>
    <source>
        <strain>Pf0-1</strain>
    </source>
</reference>
<feature type="chain" id="PRO_0000257324" description="Ribosomal RNA small subunit methyltransferase A">
    <location>
        <begin position="1"/>
        <end position="272"/>
    </location>
</feature>
<feature type="binding site" evidence="1">
    <location>
        <position position="16"/>
    </location>
    <ligand>
        <name>S-adenosyl-L-methionine</name>
        <dbReference type="ChEBI" id="CHEBI:59789"/>
    </ligand>
</feature>
<feature type="binding site" evidence="1">
    <location>
        <position position="18"/>
    </location>
    <ligand>
        <name>S-adenosyl-L-methionine</name>
        <dbReference type="ChEBI" id="CHEBI:59789"/>
    </ligand>
</feature>
<feature type="binding site" evidence="1">
    <location>
        <position position="43"/>
    </location>
    <ligand>
        <name>S-adenosyl-L-methionine</name>
        <dbReference type="ChEBI" id="CHEBI:59789"/>
    </ligand>
</feature>
<feature type="binding site" evidence="1">
    <location>
        <position position="64"/>
    </location>
    <ligand>
        <name>S-adenosyl-L-methionine</name>
        <dbReference type="ChEBI" id="CHEBI:59789"/>
    </ligand>
</feature>
<feature type="binding site" evidence="1">
    <location>
        <position position="89"/>
    </location>
    <ligand>
        <name>S-adenosyl-L-methionine</name>
        <dbReference type="ChEBI" id="CHEBI:59789"/>
    </ligand>
</feature>
<feature type="binding site" evidence="1">
    <location>
        <position position="110"/>
    </location>
    <ligand>
        <name>S-adenosyl-L-methionine</name>
        <dbReference type="ChEBI" id="CHEBI:59789"/>
    </ligand>
</feature>
<gene>
    <name evidence="1" type="primary">rsmA</name>
    <name evidence="1" type="synonym">ksgA</name>
    <name type="ordered locus">Pfl01_5135</name>
</gene>
<protein>
    <recommendedName>
        <fullName evidence="1">Ribosomal RNA small subunit methyltransferase A</fullName>
        <ecNumber evidence="1">2.1.1.182</ecNumber>
    </recommendedName>
    <alternativeName>
        <fullName evidence="1">16S rRNA (adenine(1518)-N(6)/adenine(1519)-N(6))-dimethyltransferase</fullName>
    </alternativeName>
    <alternativeName>
        <fullName evidence="1">16S rRNA dimethyladenosine transferase</fullName>
    </alternativeName>
    <alternativeName>
        <fullName evidence="1">16S rRNA dimethylase</fullName>
    </alternativeName>
    <alternativeName>
        <fullName evidence="1">S-adenosylmethionine-6-N', N'-adenosyl(rRNA) dimethyltransferase</fullName>
    </alternativeName>
</protein>
<dbReference type="EC" id="2.1.1.182" evidence="1"/>
<dbReference type="EMBL" id="CP000094">
    <property type="protein sequence ID" value="ABA76872.1"/>
    <property type="molecule type" value="Genomic_DNA"/>
</dbReference>
<dbReference type="RefSeq" id="WP_011336208.1">
    <property type="nucleotide sequence ID" value="NC_007492.2"/>
</dbReference>
<dbReference type="SMR" id="Q3K5T2"/>
<dbReference type="KEGG" id="pfo:Pfl01_5135"/>
<dbReference type="eggNOG" id="COG0030">
    <property type="taxonomic scope" value="Bacteria"/>
</dbReference>
<dbReference type="HOGENOM" id="CLU_041220_0_1_6"/>
<dbReference type="Proteomes" id="UP000002704">
    <property type="component" value="Chromosome"/>
</dbReference>
<dbReference type="GO" id="GO:0005829">
    <property type="term" value="C:cytosol"/>
    <property type="evidence" value="ECO:0007669"/>
    <property type="project" value="TreeGrafter"/>
</dbReference>
<dbReference type="GO" id="GO:0052908">
    <property type="term" value="F:16S rRNA (adenine(1518)-N(6)/adenine(1519)-N(6))-dimethyltransferase activity"/>
    <property type="evidence" value="ECO:0007669"/>
    <property type="project" value="UniProtKB-EC"/>
</dbReference>
<dbReference type="GO" id="GO:0003723">
    <property type="term" value="F:RNA binding"/>
    <property type="evidence" value="ECO:0007669"/>
    <property type="project" value="UniProtKB-KW"/>
</dbReference>
<dbReference type="FunFam" id="1.10.8.100:FF:000001">
    <property type="entry name" value="Ribosomal RNA small subunit methyltransferase A"/>
    <property type="match status" value="1"/>
</dbReference>
<dbReference type="Gene3D" id="1.10.8.100">
    <property type="entry name" value="Ribosomal RNA adenine dimethylase-like, domain 2"/>
    <property type="match status" value="1"/>
</dbReference>
<dbReference type="Gene3D" id="3.40.50.150">
    <property type="entry name" value="Vaccinia Virus protein VP39"/>
    <property type="match status" value="1"/>
</dbReference>
<dbReference type="HAMAP" id="MF_00607">
    <property type="entry name" value="16SrRNA_methyltr_A"/>
    <property type="match status" value="1"/>
</dbReference>
<dbReference type="InterPro" id="IPR001737">
    <property type="entry name" value="KsgA/Erm"/>
</dbReference>
<dbReference type="InterPro" id="IPR023165">
    <property type="entry name" value="rRNA_Ade_diMease-like_C"/>
</dbReference>
<dbReference type="InterPro" id="IPR020596">
    <property type="entry name" value="rRNA_Ade_Mease_Trfase_CS"/>
</dbReference>
<dbReference type="InterPro" id="IPR020598">
    <property type="entry name" value="rRNA_Ade_methylase_Trfase_N"/>
</dbReference>
<dbReference type="InterPro" id="IPR011530">
    <property type="entry name" value="rRNA_adenine_dimethylase"/>
</dbReference>
<dbReference type="InterPro" id="IPR029063">
    <property type="entry name" value="SAM-dependent_MTases_sf"/>
</dbReference>
<dbReference type="NCBIfam" id="TIGR00755">
    <property type="entry name" value="ksgA"/>
    <property type="match status" value="1"/>
</dbReference>
<dbReference type="PANTHER" id="PTHR11727">
    <property type="entry name" value="DIMETHYLADENOSINE TRANSFERASE"/>
    <property type="match status" value="1"/>
</dbReference>
<dbReference type="PANTHER" id="PTHR11727:SF7">
    <property type="entry name" value="DIMETHYLADENOSINE TRANSFERASE-RELATED"/>
    <property type="match status" value="1"/>
</dbReference>
<dbReference type="Pfam" id="PF00398">
    <property type="entry name" value="RrnaAD"/>
    <property type="match status" value="1"/>
</dbReference>
<dbReference type="SMART" id="SM00650">
    <property type="entry name" value="rADc"/>
    <property type="match status" value="1"/>
</dbReference>
<dbReference type="SUPFAM" id="SSF53335">
    <property type="entry name" value="S-adenosyl-L-methionine-dependent methyltransferases"/>
    <property type="match status" value="1"/>
</dbReference>
<dbReference type="PROSITE" id="PS01131">
    <property type="entry name" value="RRNA_A_DIMETH"/>
    <property type="match status" value="1"/>
</dbReference>
<dbReference type="PROSITE" id="PS51689">
    <property type="entry name" value="SAM_RNA_A_N6_MT"/>
    <property type="match status" value="1"/>
</dbReference>
<sequence length="272" mass="29997">MTEQYQHKARKRFGQNFLHDAGVIDRILRSINAKAGDRMLEIGPGQGALTAGILNSGAQLDVVELDKDLIPILNQQFAGKSNFNLHQGDALKFDFNSLNAAPNSLRVVGNLPYNISTPLIFHLLNNAGIIRDMHFMLQKEVVERLAAGPGGGDWGRLSIMVQYHCRVEHLFNVGPGAFNPPPKVDSAIVRLVPHAVLPHPAKDHRLLERVVREAFNQRRKTLRNTLKQLLSNAEIEAAGVDGSLRPEQLDLAAFVRLADKLAEQPAKAPEAD</sequence>
<keyword id="KW-0963">Cytoplasm</keyword>
<keyword id="KW-0489">Methyltransferase</keyword>
<keyword id="KW-0694">RNA-binding</keyword>
<keyword id="KW-0698">rRNA processing</keyword>
<keyword id="KW-0949">S-adenosyl-L-methionine</keyword>
<keyword id="KW-0808">Transferase</keyword>
<accession>Q3K5T2</accession>
<organism>
    <name type="scientific">Pseudomonas fluorescens (strain Pf0-1)</name>
    <dbReference type="NCBI Taxonomy" id="205922"/>
    <lineage>
        <taxon>Bacteria</taxon>
        <taxon>Pseudomonadati</taxon>
        <taxon>Pseudomonadota</taxon>
        <taxon>Gammaproteobacteria</taxon>
        <taxon>Pseudomonadales</taxon>
        <taxon>Pseudomonadaceae</taxon>
        <taxon>Pseudomonas</taxon>
    </lineage>
</organism>
<name>RSMA_PSEPF</name>
<comment type="function">
    <text evidence="1">Specifically dimethylates two adjacent adenosines (A1518 and A1519) in the loop of a conserved hairpin near the 3'-end of 16S rRNA in the 30S particle. May play a critical role in biogenesis of 30S subunits.</text>
</comment>
<comment type="catalytic activity">
    <reaction evidence="1">
        <text>adenosine(1518)/adenosine(1519) in 16S rRNA + 4 S-adenosyl-L-methionine = N(6)-dimethyladenosine(1518)/N(6)-dimethyladenosine(1519) in 16S rRNA + 4 S-adenosyl-L-homocysteine + 4 H(+)</text>
        <dbReference type="Rhea" id="RHEA:19609"/>
        <dbReference type="Rhea" id="RHEA-COMP:10232"/>
        <dbReference type="Rhea" id="RHEA-COMP:10233"/>
        <dbReference type="ChEBI" id="CHEBI:15378"/>
        <dbReference type="ChEBI" id="CHEBI:57856"/>
        <dbReference type="ChEBI" id="CHEBI:59789"/>
        <dbReference type="ChEBI" id="CHEBI:74411"/>
        <dbReference type="ChEBI" id="CHEBI:74493"/>
        <dbReference type="EC" id="2.1.1.182"/>
    </reaction>
</comment>
<comment type="subcellular location">
    <subcellularLocation>
        <location evidence="1">Cytoplasm</location>
    </subcellularLocation>
</comment>
<comment type="similarity">
    <text evidence="1">Belongs to the class I-like SAM-binding methyltransferase superfamily. rRNA adenine N(6)-methyltransferase family. RsmA subfamily.</text>
</comment>
<proteinExistence type="inferred from homology"/>